<feature type="chain" id="PRO_0000344687" description="Large ribosomal subunit protein bL36B">
    <location>
        <begin position="1"/>
        <end position="40"/>
    </location>
</feature>
<dbReference type="EMBL" id="AP009152">
    <property type="protein sequence ID" value="BAG30663.1"/>
    <property type="molecule type" value="Genomic_DNA"/>
</dbReference>
<dbReference type="RefSeq" id="WP_012399384.1">
    <property type="nucleotide sequence ID" value="NC_010617.1"/>
</dbReference>
<dbReference type="SMR" id="B2GJB5"/>
<dbReference type="STRING" id="378753.KRH_23160"/>
<dbReference type="KEGG" id="krh:KRH_23160"/>
<dbReference type="eggNOG" id="COG0257">
    <property type="taxonomic scope" value="Bacteria"/>
</dbReference>
<dbReference type="HOGENOM" id="CLU_135723_3_1_11"/>
<dbReference type="OrthoDB" id="9801558at2"/>
<dbReference type="Proteomes" id="UP000008838">
    <property type="component" value="Chromosome"/>
</dbReference>
<dbReference type="GO" id="GO:1990904">
    <property type="term" value="C:ribonucleoprotein complex"/>
    <property type="evidence" value="ECO:0007669"/>
    <property type="project" value="UniProtKB-KW"/>
</dbReference>
<dbReference type="GO" id="GO:0005840">
    <property type="term" value="C:ribosome"/>
    <property type="evidence" value="ECO:0007669"/>
    <property type="project" value="UniProtKB-KW"/>
</dbReference>
<dbReference type="GO" id="GO:0003735">
    <property type="term" value="F:structural constituent of ribosome"/>
    <property type="evidence" value="ECO:0007669"/>
    <property type="project" value="InterPro"/>
</dbReference>
<dbReference type="GO" id="GO:0006412">
    <property type="term" value="P:translation"/>
    <property type="evidence" value="ECO:0007669"/>
    <property type="project" value="UniProtKB-UniRule"/>
</dbReference>
<dbReference type="HAMAP" id="MF_00251">
    <property type="entry name" value="Ribosomal_bL36"/>
    <property type="match status" value="1"/>
</dbReference>
<dbReference type="InterPro" id="IPR000473">
    <property type="entry name" value="Ribosomal_bL36"/>
</dbReference>
<dbReference type="InterPro" id="IPR035977">
    <property type="entry name" value="Ribosomal_bL36_sp"/>
</dbReference>
<dbReference type="InterPro" id="IPR047621">
    <property type="entry name" value="Ribosomal_L36_bact"/>
</dbReference>
<dbReference type="NCBIfam" id="NF002021">
    <property type="entry name" value="PRK00831.1"/>
    <property type="match status" value="1"/>
</dbReference>
<dbReference type="PANTHER" id="PTHR47781">
    <property type="entry name" value="50S RIBOSOMAL PROTEIN L36 2"/>
    <property type="match status" value="1"/>
</dbReference>
<dbReference type="PANTHER" id="PTHR47781:SF1">
    <property type="entry name" value="LARGE RIBOSOMAL SUBUNIT PROTEIN BL36B"/>
    <property type="match status" value="1"/>
</dbReference>
<dbReference type="Pfam" id="PF00444">
    <property type="entry name" value="Ribosomal_L36"/>
    <property type="match status" value="1"/>
</dbReference>
<dbReference type="SUPFAM" id="SSF57840">
    <property type="entry name" value="Ribosomal protein L36"/>
    <property type="match status" value="1"/>
</dbReference>
<accession>B2GJB5</accession>
<name>RL362_KOCRD</name>
<proteinExistence type="inferred from homology"/>
<sequence length="40" mass="4668">MKVRTSLRSLKQIPGSQVVRRRGKTYVINKKNPRMKARQG</sequence>
<protein>
    <recommendedName>
        <fullName evidence="1">Large ribosomal subunit protein bL36B</fullName>
    </recommendedName>
    <alternativeName>
        <fullName evidence="2">50S ribosomal protein L36 2</fullName>
    </alternativeName>
</protein>
<reference key="1">
    <citation type="journal article" date="2008" name="J. Bacteriol.">
        <title>Complete genome sequence of the soil actinomycete Kocuria rhizophila.</title>
        <authorList>
            <person name="Takarada H."/>
            <person name="Sekine M."/>
            <person name="Kosugi H."/>
            <person name="Matsuo Y."/>
            <person name="Fujisawa T."/>
            <person name="Omata S."/>
            <person name="Kishi E."/>
            <person name="Shimizu A."/>
            <person name="Tsukatani N."/>
            <person name="Tanikawa S."/>
            <person name="Fujita N."/>
            <person name="Harayama S."/>
        </authorList>
    </citation>
    <scope>NUCLEOTIDE SEQUENCE [LARGE SCALE GENOMIC DNA]</scope>
    <source>
        <strain>ATCC 9341 / DSM 348 / NBRC 103217 / DC2201</strain>
    </source>
</reference>
<gene>
    <name evidence="1" type="primary">rpmJ2</name>
    <name type="ordered locus">KRH_23160</name>
</gene>
<organism>
    <name type="scientific">Kocuria rhizophila (strain ATCC 9341 / DSM 348 / NBRC 103217 / DC2201)</name>
    <dbReference type="NCBI Taxonomy" id="378753"/>
    <lineage>
        <taxon>Bacteria</taxon>
        <taxon>Bacillati</taxon>
        <taxon>Actinomycetota</taxon>
        <taxon>Actinomycetes</taxon>
        <taxon>Micrococcales</taxon>
        <taxon>Micrococcaceae</taxon>
        <taxon>Kocuria</taxon>
    </lineage>
</organism>
<keyword id="KW-1185">Reference proteome</keyword>
<keyword id="KW-0687">Ribonucleoprotein</keyword>
<keyword id="KW-0689">Ribosomal protein</keyword>
<evidence type="ECO:0000255" key="1">
    <source>
        <dbReference type="HAMAP-Rule" id="MF_00251"/>
    </source>
</evidence>
<evidence type="ECO:0000305" key="2"/>
<comment type="similarity">
    <text evidence="1">Belongs to the bacterial ribosomal protein bL36 family.</text>
</comment>